<name>EFTS_BRAFL</name>
<organism>
    <name type="scientific">Branchiostoma floridae</name>
    <name type="common">Florida lancelet</name>
    <name type="synonym">Amphioxus</name>
    <dbReference type="NCBI Taxonomy" id="7739"/>
    <lineage>
        <taxon>Eukaryota</taxon>
        <taxon>Metazoa</taxon>
        <taxon>Chordata</taxon>
        <taxon>Cephalochordata</taxon>
        <taxon>Leptocardii</taxon>
        <taxon>Amphioxiformes</taxon>
        <taxon>Branchiostomatidae</taxon>
        <taxon>Branchiostoma</taxon>
    </lineage>
</organism>
<dbReference type="EMBL" id="GG666507">
    <property type="protein sequence ID" value="EEN61119.1"/>
    <property type="molecule type" value="Genomic_DNA"/>
</dbReference>
<dbReference type="RefSeq" id="XP_002605109.1">
    <property type="nucleotide sequence ID" value="XM_002605063.1"/>
</dbReference>
<dbReference type="SMR" id="C3YEM5"/>
<dbReference type="STRING" id="7739.C3YEM5"/>
<dbReference type="eggNOG" id="KOG1071">
    <property type="taxonomic scope" value="Eukaryota"/>
</dbReference>
<dbReference type="InParanoid" id="C3YEM5"/>
<dbReference type="OrthoDB" id="277235at2759"/>
<dbReference type="Proteomes" id="UP000001554">
    <property type="component" value="Unplaced"/>
</dbReference>
<dbReference type="GO" id="GO:0005739">
    <property type="term" value="C:mitochondrion"/>
    <property type="evidence" value="ECO:0007669"/>
    <property type="project" value="UniProtKB-SubCell"/>
</dbReference>
<dbReference type="GO" id="GO:0003746">
    <property type="term" value="F:translation elongation factor activity"/>
    <property type="evidence" value="ECO:0000318"/>
    <property type="project" value="GO_Central"/>
</dbReference>
<dbReference type="GO" id="GO:0070125">
    <property type="term" value="P:mitochondrial translational elongation"/>
    <property type="evidence" value="ECO:0000318"/>
    <property type="project" value="GO_Central"/>
</dbReference>
<dbReference type="CDD" id="cd14275">
    <property type="entry name" value="UBA_EF-Ts"/>
    <property type="match status" value="1"/>
</dbReference>
<dbReference type="FunFam" id="1.10.8.10:FF:000031">
    <property type="entry name" value="Elongation factor Ts, mitochondrial"/>
    <property type="match status" value="1"/>
</dbReference>
<dbReference type="FunFam" id="3.30.479.20:FF:000007">
    <property type="entry name" value="Elongation factor Ts, mitochondrial"/>
    <property type="match status" value="1"/>
</dbReference>
<dbReference type="Gene3D" id="1.10.8.10">
    <property type="entry name" value="DNA helicase RuvA subunit, C-terminal domain"/>
    <property type="match status" value="1"/>
</dbReference>
<dbReference type="Gene3D" id="3.30.479.20">
    <property type="entry name" value="Elongation factor Ts, dimerisation domain"/>
    <property type="match status" value="2"/>
</dbReference>
<dbReference type="HAMAP" id="MF_00050">
    <property type="entry name" value="EF_Ts"/>
    <property type="match status" value="1"/>
</dbReference>
<dbReference type="InterPro" id="IPR036402">
    <property type="entry name" value="EF-Ts_dimer_sf"/>
</dbReference>
<dbReference type="InterPro" id="IPR001816">
    <property type="entry name" value="Transl_elong_EFTs/EF1B"/>
</dbReference>
<dbReference type="InterPro" id="IPR014039">
    <property type="entry name" value="Transl_elong_EFTs/EF1B_dimer"/>
</dbReference>
<dbReference type="InterPro" id="IPR018101">
    <property type="entry name" value="Transl_elong_Ts_CS"/>
</dbReference>
<dbReference type="InterPro" id="IPR009060">
    <property type="entry name" value="UBA-like_sf"/>
</dbReference>
<dbReference type="NCBIfam" id="TIGR00116">
    <property type="entry name" value="tsf"/>
    <property type="match status" value="1"/>
</dbReference>
<dbReference type="PANTHER" id="PTHR11741">
    <property type="entry name" value="ELONGATION FACTOR TS"/>
    <property type="match status" value="1"/>
</dbReference>
<dbReference type="PANTHER" id="PTHR11741:SF0">
    <property type="entry name" value="ELONGATION FACTOR TS, MITOCHONDRIAL"/>
    <property type="match status" value="1"/>
</dbReference>
<dbReference type="Pfam" id="PF25025">
    <property type="entry name" value="EF-Ts_N"/>
    <property type="match status" value="1"/>
</dbReference>
<dbReference type="Pfam" id="PF00889">
    <property type="entry name" value="EF_TS"/>
    <property type="match status" value="1"/>
</dbReference>
<dbReference type="SUPFAM" id="SSF54713">
    <property type="entry name" value="Elongation factor Ts (EF-Ts), dimerisation domain"/>
    <property type="match status" value="2"/>
</dbReference>
<dbReference type="SUPFAM" id="SSF46934">
    <property type="entry name" value="UBA-like"/>
    <property type="match status" value="1"/>
</dbReference>
<dbReference type="PROSITE" id="PS01127">
    <property type="entry name" value="EF_TS_2"/>
    <property type="match status" value="1"/>
</dbReference>
<accession>C3YEM5</accession>
<keyword id="KW-0251">Elongation factor</keyword>
<keyword id="KW-0496">Mitochondrion</keyword>
<keyword id="KW-0648">Protein biosynthesis</keyword>
<keyword id="KW-1185">Reference proteome</keyword>
<protein>
    <recommendedName>
        <fullName evidence="1">Elongation factor Ts, mitochondrial</fullName>
        <shortName evidence="1">EF-Ts</shortName>
        <shortName evidence="1">EF-TsMt</shortName>
    </recommendedName>
</protein>
<gene>
    <name type="ORF">BRAFLDRAFT_84221</name>
</gene>
<sequence length="331" mass="36525">MPCPTGVTRCSAGVSSLARCLHTCPVLEGVTKANLSKLRKKTGFTFVNCRKALEKFENDLEQAEKWLKEQAQKEGWAKATKLQDRQTAQGLVGVAQEGTMATMVEVNCETDFVARNPKFRQLVTQVAMATLGDVKAHPQWTLGWLKALHTGEELKQLQIGDTTLGDLTALTIGTLGENIQIRRAMYYSVPPIPTKHVGVYVHAPVAGTTGGQSGSCALGKYGALVAFRRKNTEFQNFNAAELGRRLGQHVVGMSPLTVGEMPEVREEEGEKKDGDKQDEEERSTDSDEDETQMLRQTFLLDPTMTVGEMTRQQGIELLDFVRFECGEVEES</sequence>
<comment type="function">
    <text evidence="1">Associates with the EF-Tu.GDP complex and induces the exchange of GDP to GTP. It remains bound to the aminoacyl-tRNA.EF-Tu.GTP complex up to the GTP hydrolysis stage on the ribosome.</text>
</comment>
<comment type="subcellular location">
    <subcellularLocation>
        <location evidence="1">Mitochondrion</location>
    </subcellularLocation>
</comment>
<comment type="miscellaneous">
    <text evidence="1">This protein may be expected to contain an N-terminal transit peptide but none has been predicted.</text>
</comment>
<comment type="similarity">
    <text evidence="1">Belongs to the EF-Ts family.</text>
</comment>
<proteinExistence type="inferred from homology"/>
<reference key="1">
    <citation type="journal article" date="2008" name="Nature">
        <title>The amphioxus genome and the evolution of the chordate karyotype.</title>
        <authorList>
            <person name="Putnam N.H."/>
            <person name="Butts T."/>
            <person name="Ferrier D.E.K."/>
            <person name="Furlong R.F."/>
            <person name="Hellsten U."/>
            <person name="Kawashima T."/>
            <person name="Robinson-Rechavi M."/>
            <person name="Shoguchi E."/>
            <person name="Terry A."/>
            <person name="Yu J.-K."/>
            <person name="Benito-Gutierrez E.L."/>
            <person name="Dubchak I."/>
            <person name="Garcia-Fernandez J."/>
            <person name="Gibson-Brown J.J."/>
            <person name="Grigoriev I.V."/>
            <person name="Horton A.C."/>
            <person name="de Jong P.J."/>
            <person name="Jurka J."/>
            <person name="Kapitonov V.V."/>
            <person name="Kohara Y."/>
            <person name="Kuroki Y."/>
            <person name="Lindquist E."/>
            <person name="Lucas S."/>
            <person name="Osoegawa K."/>
            <person name="Pennacchio L.A."/>
            <person name="Salamov A.A."/>
            <person name="Satou Y."/>
            <person name="Sauka-Spengler T."/>
            <person name="Schmutz J."/>
            <person name="Shin-I T."/>
            <person name="Toyoda A."/>
            <person name="Bronner-Fraser M."/>
            <person name="Fujiyama A."/>
            <person name="Holland L.Z."/>
            <person name="Holland P.W.H."/>
            <person name="Satoh N."/>
            <person name="Rokhsar D.S."/>
        </authorList>
    </citation>
    <scope>NUCLEOTIDE SEQUENCE [LARGE SCALE GENOMIC DNA]</scope>
    <source>
        <strain>S238N-H82</strain>
        <tissue>Testis</tissue>
    </source>
</reference>
<feature type="chain" id="PRO_0000402315" description="Elongation factor Ts, mitochondrial">
    <location>
        <begin position="1"/>
        <end position="331"/>
    </location>
</feature>
<feature type="region of interest" description="Disordered" evidence="2">
    <location>
        <begin position="254"/>
        <end position="295"/>
    </location>
</feature>
<feature type="compositionally biased region" description="Basic and acidic residues" evidence="2">
    <location>
        <begin position="262"/>
        <end position="275"/>
    </location>
</feature>
<feature type="compositionally biased region" description="Acidic residues" evidence="2">
    <location>
        <begin position="276"/>
        <end position="291"/>
    </location>
</feature>
<evidence type="ECO:0000255" key="1">
    <source>
        <dbReference type="HAMAP-Rule" id="MF_03135"/>
    </source>
</evidence>
<evidence type="ECO:0000256" key="2">
    <source>
        <dbReference type="SAM" id="MobiDB-lite"/>
    </source>
</evidence>